<reference key="1">
    <citation type="journal article" date="2008" name="J. Bacteriol.">
        <title>Insights into plant cell wall degradation from the genome sequence of the soil bacterium Cellvibrio japonicus.</title>
        <authorList>
            <person name="DeBoy R.T."/>
            <person name="Mongodin E.F."/>
            <person name="Fouts D.E."/>
            <person name="Tailford L.E."/>
            <person name="Khouri H."/>
            <person name="Emerson J.B."/>
            <person name="Mohamoud Y."/>
            <person name="Watkins K."/>
            <person name="Henrissat B."/>
            <person name="Gilbert H.J."/>
            <person name="Nelson K.E."/>
        </authorList>
    </citation>
    <scope>NUCLEOTIDE SEQUENCE [LARGE SCALE GENOMIC DNA]</scope>
    <source>
        <strain>Ueda107</strain>
    </source>
</reference>
<dbReference type="EC" id="6.3.3.3" evidence="1"/>
<dbReference type="EMBL" id="CP000934">
    <property type="protein sequence ID" value="ACE86043.1"/>
    <property type="molecule type" value="Genomic_DNA"/>
</dbReference>
<dbReference type="RefSeq" id="WP_012486111.1">
    <property type="nucleotide sequence ID" value="NC_010995.1"/>
</dbReference>
<dbReference type="SMR" id="B3PI90"/>
<dbReference type="STRING" id="498211.CJA_0429"/>
<dbReference type="KEGG" id="cja:CJA_0429"/>
<dbReference type="eggNOG" id="COG0132">
    <property type="taxonomic scope" value="Bacteria"/>
</dbReference>
<dbReference type="HOGENOM" id="CLU_072551_0_0_6"/>
<dbReference type="OrthoDB" id="9802097at2"/>
<dbReference type="UniPathway" id="UPA00078">
    <property type="reaction ID" value="UER00161"/>
</dbReference>
<dbReference type="Proteomes" id="UP000001036">
    <property type="component" value="Chromosome"/>
</dbReference>
<dbReference type="GO" id="GO:0005829">
    <property type="term" value="C:cytosol"/>
    <property type="evidence" value="ECO:0007669"/>
    <property type="project" value="TreeGrafter"/>
</dbReference>
<dbReference type="GO" id="GO:0005524">
    <property type="term" value="F:ATP binding"/>
    <property type="evidence" value="ECO:0007669"/>
    <property type="project" value="UniProtKB-UniRule"/>
</dbReference>
<dbReference type="GO" id="GO:0004141">
    <property type="term" value="F:dethiobiotin synthase activity"/>
    <property type="evidence" value="ECO:0007669"/>
    <property type="project" value="UniProtKB-UniRule"/>
</dbReference>
<dbReference type="GO" id="GO:0000287">
    <property type="term" value="F:magnesium ion binding"/>
    <property type="evidence" value="ECO:0007669"/>
    <property type="project" value="UniProtKB-UniRule"/>
</dbReference>
<dbReference type="GO" id="GO:0009102">
    <property type="term" value="P:biotin biosynthetic process"/>
    <property type="evidence" value="ECO:0007669"/>
    <property type="project" value="UniProtKB-UniRule"/>
</dbReference>
<dbReference type="CDD" id="cd03109">
    <property type="entry name" value="DTBS"/>
    <property type="match status" value="1"/>
</dbReference>
<dbReference type="FunFam" id="3.40.50.300:FF:000292">
    <property type="entry name" value="ATP-dependent dethiobiotin synthetase BioD"/>
    <property type="match status" value="1"/>
</dbReference>
<dbReference type="Gene3D" id="3.40.50.300">
    <property type="entry name" value="P-loop containing nucleotide triphosphate hydrolases"/>
    <property type="match status" value="1"/>
</dbReference>
<dbReference type="HAMAP" id="MF_00336">
    <property type="entry name" value="BioD"/>
    <property type="match status" value="1"/>
</dbReference>
<dbReference type="InterPro" id="IPR004472">
    <property type="entry name" value="DTB_synth_BioD"/>
</dbReference>
<dbReference type="InterPro" id="IPR027417">
    <property type="entry name" value="P-loop_NTPase"/>
</dbReference>
<dbReference type="NCBIfam" id="TIGR00347">
    <property type="entry name" value="bioD"/>
    <property type="match status" value="1"/>
</dbReference>
<dbReference type="PANTHER" id="PTHR43210">
    <property type="entry name" value="DETHIOBIOTIN SYNTHETASE"/>
    <property type="match status" value="1"/>
</dbReference>
<dbReference type="PANTHER" id="PTHR43210:SF5">
    <property type="entry name" value="DETHIOBIOTIN SYNTHETASE"/>
    <property type="match status" value="1"/>
</dbReference>
<dbReference type="Pfam" id="PF13500">
    <property type="entry name" value="AAA_26"/>
    <property type="match status" value="1"/>
</dbReference>
<dbReference type="PIRSF" id="PIRSF006755">
    <property type="entry name" value="DTB_synth"/>
    <property type="match status" value="1"/>
</dbReference>
<dbReference type="SUPFAM" id="SSF52540">
    <property type="entry name" value="P-loop containing nucleoside triphosphate hydrolases"/>
    <property type="match status" value="1"/>
</dbReference>
<sequence>MSKKAFFITGTDTDAGKTLVATGLLAAARLRGLSTLGLKPVAAGCTRTEQGLRNSDALALQAQSTLPVVYEQVNPVALEAAIAPHIAALQEKRSLSADRLAGFCRSSLRQADFTLVEGAGGWRVPLNPSETLANLAQLLRLPVVLVVGMRLGCINHALLTVEAIRNDGLPLVGWVANVLDADMPVLEENIASLAQRIPAPCLGVVPRLSMASADAASAHLDLTPLLDA</sequence>
<gene>
    <name evidence="1" type="primary">bioD</name>
    <name type="ordered locus">CJA_0429</name>
</gene>
<accession>B3PI90</accession>
<proteinExistence type="inferred from homology"/>
<evidence type="ECO:0000255" key="1">
    <source>
        <dbReference type="HAMAP-Rule" id="MF_00336"/>
    </source>
</evidence>
<organism>
    <name type="scientific">Cellvibrio japonicus (strain Ueda107)</name>
    <name type="common">Pseudomonas fluorescens subsp. cellulosa</name>
    <dbReference type="NCBI Taxonomy" id="498211"/>
    <lineage>
        <taxon>Bacteria</taxon>
        <taxon>Pseudomonadati</taxon>
        <taxon>Pseudomonadota</taxon>
        <taxon>Gammaproteobacteria</taxon>
        <taxon>Cellvibrionales</taxon>
        <taxon>Cellvibrionaceae</taxon>
        <taxon>Cellvibrio</taxon>
    </lineage>
</organism>
<keyword id="KW-0067">ATP-binding</keyword>
<keyword id="KW-0093">Biotin biosynthesis</keyword>
<keyword id="KW-0963">Cytoplasm</keyword>
<keyword id="KW-0436">Ligase</keyword>
<keyword id="KW-0460">Magnesium</keyword>
<keyword id="KW-0479">Metal-binding</keyword>
<keyword id="KW-0547">Nucleotide-binding</keyword>
<keyword id="KW-1185">Reference proteome</keyword>
<name>BIOD_CELJU</name>
<protein>
    <recommendedName>
        <fullName evidence="1">ATP-dependent dethiobiotin synthetase BioD</fullName>
        <ecNumber evidence="1">6.3.3.3</ecNumber>
    </recommendedName>
    <alternativeName>
        <fullName evidence="1">DTB synthetase</fullName>
        <shortName evidence="1">DTBS</shortName>
    </alternativeName>
    <alternativeName>
        <fullName evidence="1">Dethiobiotin synthase</fullName>
    </alternativeName>
</protein>
<feature type="chain" id="PRO_1000133207" description="ATP-dependent dethiobiotin synthetase BioD">
    <location>
        <begin position="1"/>
        <end position="228"/>
    </location>
</feature>
<feature type="active site" evidence="1">
    <location>
        <position position="39"/>
    </location>
</feature>
<feature type="binding site" evidence="1">
    <location>
        <begin position="14"/>
        <end position="19"/>
    </location>
    <ligand>
        <name>ATP</name>
        <dbReference type="ChEBI" id="CHEBI:30616"/>
    </ligand>
</feature>
<feature type="binding site" evidence="1">
    <location>
        <position position="18"/>
    </location>
    <ligand>
        <name>Mg(2+)</name>
        <dbReference type="ChEBI" id="CHEBI:18420"/>
    </ligand>
</feature>
<feature type="binding site" evidence="1">
    <location>
        <position position="56"/>
    </location>
    <ligand>
        <name>ATP</name>
        <dbReference type="ChEBI" id="CHEBI:30616"/>
    </ligand>
</feature>
<feature type="binding site" evidence="1">
    <location>
        <position position="56"/>
    </location>
    <ligand>
        <name>Mg(2+)</name>
        <dbReference type="ChEBI" id="CHEBI:18420"/>
    </ligand>
</feature>
<feature type="binding site" evidence="1">
    <location>
        <begin position="117"/>
        <end position="120"/>
    </location>
    <ligand>
        <name>ATP</name>
        <dbReference type="ChEBI" id="CHEBI:30616"/>
    </ligand>
</feature>
<feature type="binding site" evidence="1">
    <location>
        <position position="117"/>
    </location>
    <ligand>
        <name>Mg(2+)</name>
        <dbReference type="ChEBI" id="CHEBI:18420"/>
    </ligand>
</feature>
<feature type="binding site" evidence="1">
    <location>
        <begin position="206"/>
        <end position="208"/>
    </location>
    <ligand>
        <name>ATP</name>
        <dbReference type="ChEBI" id="CHEBI:30616"/>
    </ligand>
</feature>
<comment type="function">
    <text evidence="1">Catalyzes a mechanistically unusual reaction, the ATP-dependent insertion of CO2 between the N7 and N8 nitrogen atoms of 7,8-diaminopelargonic acid (DAPA, also called 7,8-diammoniononanoate) to form a ureido ring.</text>
</comment>
<comment type="catalytic activity">
    <reaction evidence="1">
        <text>(7R,8S)-7,8-diammoniononanoate + CO2 + ATP = (4R,5S)-dethiobiotin + ADP + phosphate + 3 H(+)</text>
        <dbReference type="Rhea" id="RHEA:15805"/>
        <dbReference type="ChEBI" id="CHEBI:15378"/>
        <dbReference type="ChEBI" id="CHEBI:16526"/>
        <dbReference type="ChEBI" id="CHEBI:30616"/>
        <dbReference type="ChEBI" id="CHEBI:43474"/>
        <dbReference type="ChEBI" id="CHEBI:149469"/>
        <dbReference type="ChEBI" id="CHEBI:149473"/>
        <dbReference type="ChEBI" id="CHEBI:456216"/>
        <dbReference type="EC" id="6.3.3.3"/>
    </reaction>
</comment>
<comment type="cofactor">
    <cofactor evidence="1">
        <name>Mg(2+)</name>
        <dbReference type="ChEBI" id="CHEBI:18420"/>
    </cofactor>
</comment>
<comment type="pathway">
    <text evidence="1">Cofactor biosynthesis; biotin biosynthesis; biotin from 7,8-diaminononanoate: step 1/2.</text>
</comment>
<comment type="subunit">
    <text evidence="1">Homodimer.</text>
</comment>
<comment type="subcellular location">
    <subcellularLocation>
        <location evidence="1">Cytoplasm</location>
    </subcellularLocation>
</comment>
<comment type="similarity">
    <text evidence="1">Belongs to the dethiobiotin synthetase family.</text>
</comment>